<protein>
    <recommendedName>
        <fullName>Peptide-N(4)-(N-acetyl-beta-glucosaminyl)asparagine amidase</fullName>
        <shortName>PNGase</shortName>
        <ecNumber>3.5.1.52</ecNumber>
    </recommendedName>
    <alternativeName>
        <fullName>Peptide:N-glycanase 1</fullName>
    </alternativeName>
</protein>
<gene>
    <name type="primary">PNG1</name>
    <name type="ordered locus">YALI0C23562g</name>
</gene>
<organism>
    <name type="scientific">Yarrowia lipolytica (strain CLIB 122 / E 150)</name>
    <name type="common">Yeast</name>
    <name type="synonym">Candida lipolytica</name>
    <dbReference type="NCBI Taxonomy" id="284591"/>
    <lineage>
        <taxon>Eukaryota</taxon>
        <taxon>Fungi</taxon>
        <taxon>Dikarya</taxon>
        <taxon>Ascomycota</taxon>
        <taxon>Saccharomycotina</taxon>
        <taxon>Dipodascomycetes</taxon>
        <taxon>Dipodascales</taxon>
        <taxon>Dipodascales incertae sedis</taxon>
        <taxon>Yarrowia</taxon>
    </lineage>
</organism>
<dbReference type="EC" id="3.5.1.52"/>
<dbReference type="EMBL" id="CR382129">
    <property type="protein sequence ID" value="CAG82507.1"/>
    <property type="molecule type" value="Genomic_DNA"/>
</dbReference>
<dbReference type="RefSeq" id="XP_502187.1">
    <property type="nucleotide sequence ID" value="XM_502187.1"/>
</dbReference>
<dbReference type="SMR" id="Q6CAX5"/>
<dbReference type="FunCoup" id="Q6CAX5">
    <property type="interactions" value="91"/>
</dbReference>
<dbReference type="STRING" id="284591.Q6CAX5"/>
<dbReference type="EnsemblFungi" id="CAG82507">
    <property type="protein sequence ID" value="CAG82507"/>
    <property type="gene ID" value="YALI0_C23562g"/>
</dbReference>
<dbReference type="KEGG" id="yli:2909617"/>
<dbReference type="VEuPathDB" id="FungiDB:YALI0_C23562g"/>
<dbReference type="HOGENOM" id="CLU_031058_0_1_1"/>
<dbReference type="InParanoid" id="Q6CAX5"/>
<dbReference type="OMA" id="AWDKPRL"/>
<dbReference type="OrthoDB" id="107898at4891"/>
<dbReference type="Proteomes" id="UP000001300">
    <property type="component" value="Chromosome C"/>
</dbReference>
<dbReference type="GO" id="GO:0005737">
    <property type="term" value="C:cytoplasm"/>
    <property type="evidence" value="ECO:0007669"/>
    <property type="project" value="UniProtKB-SubCell"/>
</dbReference>
<dbReference type="GO" id="GO:0046872">
    <property type="term" value="F:metal ion binding"/>
    <property type="evidence" value="ECO:0007669"/>
    <property type="project" value="UniProtKB-KW"/>
</dbReference>
<dbReference type="GO" id="GO:0000224">
    <property type="term" value="F:peptide-N4-(N-acetyl-beta-glucosaminyl)asparagine amidase activity"/>
    <property type="evidence" value="ECO:0007669"/>
    <property type="project" value="UniProtKB-EC"/>
</dbReference>
<dbReference type="FunFam" id="3.10.620.30:FF:000004">
    <property type="entry name" value="Peptidase (PNG1)"/>
    <property type="match status" value="1"/>
</dbReference>
<dbReference type="FunFam" id="2.20.25.10:FF:000064">
    <property type="entry name" value="Peptide-N(4)-(N-acetyl-beta-glucosaminyl)asparagine amidase"/>
    <property type="match status" value="1"/>
</dbReference>
<dbReference type="Gene3D" id="2.20.25.10">
    <property type="match status" value="1"/>
</dbReference>
<dbReference type="Gene3D" id="3.10.620.30">
    <property type="match status" value="1"/>
</dbReference>
<dbReference type="InterPro" id="IPR038765">
    <property type="entry name" value="Papain-like_cys_pep_sf"/>
</dbReference>
<dbReference type="InterPro" id="IPR050883">
    <property type="entry name" value="PNGase"/>
</dbReference>
<dbReference type="InterPro" id="IPR002931">
    <property type="entry name" value="Transglutaminase-like"/>
</dbReference>
<dbReference type="PANTHER" id="PTHR12143">
    <property type="entry name" value="PEPTIDE N-GLYCANASE PNGASE -RELATED"/>
    <property type="match status" value="1"/>
</dbReference>
<dbReference type="PANTHER" id="PTHR12143:SF19">
    <property type="entry name" value="PEPTIDE-N(4)-(N-ACETYL-BETA-GLUCOSAMINYL)ASPARAGINE AMIDASE"/>
    <property type="match status" value="1"/>
</dbReference>
<dbReference type="Pfam" id="PF01841">
    <property type="entry name" value="Transglut_core"/>
    <property type="match status" value="1"/>
</dbReference>
<dbReference type="SMART" id="SM00460">
    <property type="entry name" value="TGc"/>
    <property type="match status" value="1"/>
</dbReference>
<dbReference type="SUPFAM" id="SSF54001">
    <property type="entry name" value="Cysteine proteinases"/>
    <property type="match status" value="1"/>
</dbReference>
<proteinExistence type="inferred from homology"/>
<comment type="function">
    <text evidence="1">Specifically deglycosylates the denatured form of N-linked glycoproteins in the cytoplasm and assists their proteasome-mediated degradation. Cleaves the beta-aspartyl-glucosamine (GlcNAc) of the glycan and the amide side chain of Asn, converting Asn to Asp. Prefers proteins containing high-mannose over those bearing complex type oligosaccharides. Can recognize misfolded proteins in the endoplasmic reticulum that are exported to the cytosol to be destroyed and deglycosylate them, while it has no activity toward native proteins. Deglycosylation is a prerequisite for subsequent proteasome-mediated degradation of some, but not all, misfolded glycoproteins (By similarity).</text>
</comment>
<comment type="catalytic activity">
    <reaction>
        <text>Hydrolysis of an N(4)-(acetyl-beta-D-glucosaminyl)asparagine residue in which the glucosamine residue may be further glycosylated, to yield a (substituted) N-acetyl-beta-D-glucosaminylamine and a peptide containing an aspartate residue.</text>
        <dbReference type="EC" id="3.5.1.52"/>
    </reaction>
</comment>
<comment type="cofactor">
    <cofactor evidence="1">
        <name>Zn(2+)</name>
        <dbReference type="ChEBI" id="CHEBI:29105"/>
    </cofactor>
    <text evidence="1">Binds 1 zinc ion per subunit.</text>
</comment>
<comment type="subcellular location">
    <subcellularLocation>
        <location evidence="1">Cytoplasm</location>
    </subcellularLocation>
</comment>
<comment type="similarity">
    <text evidence="3">Belongs to the transglutaminase-like superfamily. PNGase family.</text>
</comment>
<reference key="1">
    <citation type="journal article" date="2004" name="Nature">
        <title>Genome evolution in yeasts.</title>
        <authorList>
            <person name="Dujon B."/>
            <person name="Sherman D."/>
            <person name="Fischer G."/>
            <person name="Durrens P."/>
            <person name="Casaregola S."/>
            <person name="Lafontaine I."/>
            <person name="de Montigny J."/>
            <person name="Marck C."/>
            <person name="Neuveglise C."/>
            <person name="Talla E."/>
            <person name="Goffard N."/>
            <person name="Frangeul L."/>
            <person name="Aigle M."/>
            <person name="Anthouard V."/>
            <person name="Babour A."/>
            <person name="Barbe V."/>
            <person name="Barnay S."/>
            <person name="Blanchin S."/>
            <person name="Beckerich J.-M."/>
            <person name="Beyne E."/>
            <person name="Bleykasten C."/>
            <person name="Boisrame A."/>
            <person name="Boyer J."/>
            <person name="Cattolico L."/>
            <person name="Confanioleri F."/>
            <person name="de Daruvar A."/>
            <person name="Despons L."/>
            <person name="Fabre E."/>
            <person name="Fairhead C."/>
            <person name="Ferry-Dumazet H."/>
            <person name="Groppi A."/>
            <person name="Hantraye F."/>
            <person name="Hennequin C."/>
            <person name="Jauniaux N."/>
            <person name="Joyet P."/>
            <person name="Kachouri R."/>
            <person name="Kerrest A."/>
            <person name="Koszul R."/>
            <person name="Lemaire M."/>
            <person name="Lesur I."/>
            <person name="Ma L."/>
            <person name="Muller H."/>
            <person name="Nicaud J.-M."/>
            <person name="Nikolski M."/>
            <person name="Oztas S."/>
            <person name="Ozier-Kalogeropoulos O."/>
            <person name="Pellenz S."/>
            <person name="Potier S."/>
            <person name="Richard G.-F."/>
            <person name="Straub M.-L."/>
            <person name="Suleau A."/>
            <person name="Swennen D."/>
            <person name="Tekaia F."/>
            <person name="Wesolowski-Louvel M."/>
            <person name="Westhof E."/>
            <person name="Wirth B."/>
            <person name="Zeniou-Meyer M."/>
            <person name="Zivanovic Y."/>
            <person name="Bolotin-Fukuhara M."/>
            <person name="Thierry A."/>
            <person name="Bouchier C."/>
            <person name="Caudron B."/>
            <person name="Scarpelli C."/>
            <person name="Gaillardin C."/>
            <person name="Weissenbach J."/>
            <person name="Wincker P."/>
            <person name="Souciet J.-L."/>
        </authorList>
    </citation>
    <scope>NUCLEOTIDE SEQUENCE [LARGE SCALE GENOMIC DNA]</scope>
    <source>
        <strain>CLIB 122 / E 150</strain>
    </source>
</reference>
<feature type="chain" id="PRO_0000248995" description="Peptide-N(4)-(N-acetyl-beta-glucosaminyl)asparagine amidase">
    <location>
        <begin position="1"/>
        <end position="356"/>
    </location>
</feature>
<feature type="region of interest" description="Disordered" evidence="2">
    <location>
        <begin position="300"/>
        <end position="356"/>
    </location>
</feature>
<feature type="compositionally biased region" description="Basic and acidic residues" evidence="2">
    <location>
        <begin position="307"/>
        <end position="316"/>
    </location>
</feature>
<feature type="compositionally biased region" description="Basic and acidic residues" evidence="2">
    <location>
        <begin position="346"/>
        <end position="356"/>
    </location>
</feature>
<feature type="active site" description="Nucleophile" evidence="1">
    <location>
        <position position="189"/>
    </location>
</feature>
<feature type="active site" evidence="1">
    <location>
        <position position="216"/>
    </location>
</feature>
<feature type="active site" evidence="1">
    <location>
        <position position="233"/>
    </location>
</feature>
<feature type="binding site" evidence="1">
    <location>
        <position position="129"/>
    </location>
    <ligand>
        <name>Zn(2+)</name>
        <dbReference type="ChEBI" id="CHEBI:29105"/>
    </ligand>
</feature>
<feature type="binding site" evidence="1">
    <location>
        <position position="132"/>
    </location>
    <ligand>
        <name>Zn(2+)</name>
        <dbReference type="ChEBI" id="CHEBI:29105"/>
    </ligand>
</feature>
<feature type="binding site" evidence="1">
    <location>
        <position position="163"/>
    </location>
    <ligand>
        <name>Zn(2+)</name>
        <dbReference type="ChEBI" id="CHEBI:29105"/>
    </ligand>
</feature>
<feature type="binding site" evidence="1">
    <location>
        <position position="166"/>
    </location>
    <ligand>
        <name>Zn(2+)</name>
        <dbReference type="ChEBI" id="CHEBI:29105"/>
    </ligand>
</feature>
<feature type="binding site" evidence="1">
    <location>
        <position position="236"/>
    </location>
    <ligand>
        <name>substrate</name>
    </ligand>
</feature>
<sequence>MSQATFAKELTAKFAQLWTEKTKRPLPPVNQAMMQRLRQGQRQSGPNEVFSRVSALFRDLSLIPQSFENAELQDMAMEILPLDRLYSVAEERAEEEGERDNWGLQDYLIMELLRWFKQDYFTWVNSPPCETCGENGNVQFVRRENSTPEEQKYDASGTEVHQCSNCNTEIRFPRYNDLSKLMETRRGRCGEWAKCFAFFCRALGLRTRYIWNAEDHVWSEVYSERRKEWIHTDSCEEAWNSPTIYSQGWGKKMSYVVGFSGDGVTDVTRRYVRKADQQLPRTMVPDEQFKTILNSITSDIRQNLSPSEKEELKREDEAEERELASYNADEPQEAQMPRQSGSVEWTKARGEGGSDD</sequence>
<name>PNG1_YARLI</name>
<accession>Q6CAX5</accession>
<evidence type="ECO:0000250" key="1"/>
<evidence type="ECO:0000256" key="2">
    <source>
        <dbReference type="SAM" id="MobiDB-lite"/>
    </source>
</evidence>
<evidence type="ECO:0000305" key="3"/>
<keyword id="KW-0963">Cytoplasm</keyword>
<keyword id="KW-0378">Hydrolase</keyword>
<keyword id="KW-0479">Metal-binding</keyword>
<keyword id="KW-1185">Reference proteome</keyword>
<keyword id="KW-0862">Zinc</keyword>